<reference key="1">
    <citation type="journal article" date="2010" name="BMC Genomics">
        <title>A genomic perspective on the potential of Actinobacillus succinogenes for industrial succinate production.</title>
        <authorList>
            <person name="McKinlay J.B."/>
            <person name="Laivenieks M."/>
            <person name="Schindler B.D."/>
            <person name="McKinlay A.A."/>
            <person name="Siddaramappa S."/>
            <person name="Challacombe J.F."/>
            <person name="Lowry S.R."/>
            <person name="Clum A."/>
            <person name="Lapidus A.L."/>
            <person name="Burkhart K.B."/>
            <person name="Harkins V."/>
            <person name="Vieille C."/>
        </authorList>
    </citation>
    <scope>NUCLEOTIDE SEQUENCE [LARGE SCALE GENOMIC DNA]</scope>
    <source>
        <strain>ATCC 55618 / DSM 22257 / CCUG 43843 / 130Z</strain>
    </source>
</reference>
<dbReference type="EC" id="3.2.2.9" evidence="1"/>
<dbReference type="EMBL" id="CP000746">
    <property type="protein sequence ID" value="ABR74868.1"/>
    <property type="molecule type" value="Genomic_DNA"/>
</dbReference>
<dbReference type="RefSeq" id="WP_012073245.1">
    <property type="nucleotide sequence ID" value="NC_009655.1"/>
</dbReference>
<dbReference type="SMR" id="A6VPH1"/>
<dbReference type="STRING" id="339671.Asuc_1510"/>
<dbReference type="KEGG" id="asu:Asuc_1510"/>
<dbReference type="eggNOG" id="COG0775">
    <property type="taxonomic scope" value="Bacteria"/>
</dbReference>
<dbReference type="HOGENOM" id="CLU_031248_2_2_6"/>
<dbReference type="OrthoDB" id="9792278at2"/>
<dbReference type="UniPathway" id="UPA00904">
    <property type="reaction ID" value="UER00871"/>
</dbReference>
<dbReference type="Proteomes" id="UP000001114">
    <property type="component" value="Chromosome"/>
</dbReference>
<dbReference type="GO" id="GO:0005829">
    <property type="term" value="C:cytosol"/>
    <property type="evidence" value="ECO:0007669"/>
    <property type="project" value="TreeGrafter"/>
</dbReference>
<dbReference type="GO" id="GO:0008782">
    <property type="term" value="F:adenosylhomocysteine nucleosidase activity"/>
    <property type="evidence" value="ECO:0007669"/>
    <property type="project" value="UniProtKB-UniRule"/>
</dbReference>
<dbReference type="GO" id="GO:0008930">
    <property type="term" value="F:methylthioadenosine nucleosidase activity"/>
    <property type="evidence" value="ECO:0007669"/>
    <property type="project" value="UniProtKB-UniRule"/>
</dbReference>
<dbReference type="GO" id="GO:0019509">
    <property type="term" value="P:L-methionine salvage from methylthioadenosine"/>
    <property type="evidence" value="ECO:0007669"/>
    <property type="project" value="UniProtKB-UniRule"/>
</dbReference>
<dbReference type="GO" id="GO:0019284">
    <property type="term" value="P:L-methionine salvage from S-adenosylmethionine"/>
    <property type="evidence" value="ECO:0007669"/>
    <property type="project" value="TreeGrafter"/>
</dbReference>
<dbReference type="GO" id="GO:0009164">
    <property type="term" value="P:nucleoside catabolic process"/>
    <property type="evidence" value="ECO:0007669"/>
    <property type="project" value="InterPro"/>
</dbReference>
<dbReference type="CDD" id="cd09008">
    <property type="entry name" value="MTAN"/>
    <property type="match status" value="1"/>
</dbReference>
<dbReference type="FunFam" id="3.40.50.1580:FF:000001">
    <property type="entry name" value="MTA/SAH nucleosidase family protein"/>
    <property type="match status" value="1"/>
</dbReference>
<dbReference type="Gene3D" id="3.40.50.1580">
    <property type="entry name" value="Nucleoside phosphorylase domain"/>
    <property type="match status" value="1"/>
</dbReference>
<dbReference type="HAMAP" id="MF_01684">
    <property type="entry name" value="Salvage_MtnN"/>
    <property type="match status" value="1"/>
</dbReference>
<dbReference type="InterPro" id="IPR010049">
    <property type="entry name" value="MTA_SAH_Nsdase"/>
</dbReference>
<dbReference type="InterPro" id="IPR000845">
    <property type="entry name" value="Nucleoside_phosphorylase_d"/>
</dbReference>
<dbReference type="InterPro" id="IPR035994">
    <property type="entry name" value="Nucleoside_phosphorylase_sf"/>
</dbReference>
<dbReference type="NCBIfam" id="TIGR01704">
    <property type="entry name" value="MTA_SAH-Nsdase"/>
    <property type="match status" value="1"/>
</dbReference>
<dbReference type="NCBIfam" id="NF004079">
    <property type="entry name" value="PRK05584.1"/>
    <property type="match status" value="1"/>
</dbReference>
<dbReference type="PANTHER" id="PTHR46832">
    <property type="entry name" value="5'-METHYLTHIOADENOSINE/S-ADENOSYLHOMOCYSTEINE NUCLEOSIDASE"/>
    <property type="match status" value="1"/>
</dbReference>
<dbReference type="PANTHER" id="PTHR46832:SF1">
    <property type="entry name" value="5'-METHYLTHIOADENOSINE_S-ADENOSYLHOMOCYSTEINE NUCLEOSIDASE"/>
    <property type="match status" value="1"/>
</dbReference>
<dbReference type="Pfam" id="PF01048">
    <property type="entry name" value="PNP_UDP_1"/>
    <property type="match status" value="1"/>
</dbReference>
<dbReference type="SUPFAM" id="SSF53167">
    <property type="entry name" value="Purine and uridine phosphorylases"/>
    <property type="match status" value="1"/>
</dbReference>
<name>MTNN_ACTSZ</name>
<evidence type="ECO:0000255" key="1">
    <source>
        <dbReference type="HAMAP-Rule" id="MF_01684"/>
    </source>
</evidence>
<comment type="function">
    <text evidence="1">Catalyzes the irreversible cleavage of the glycosidic bond in both 5'-methylthioadenosine (MTA) and S-adenosylhomocysteine (SAH/AdoHcy) to adenine and the corresponding thioribose, 5'-methylthioribose and S-ribosylhomocysteine, respectively. Also cleaves 5'-deoxyadenosine, a toxic by-product of radical S-adenosylmethionine (SAM) enzymes, into 5-deoxyribose and adenine.</text>
</comment>
<comment type="catalytic activity">
    <reaction evidence="1">
        <text>S-adenosyl-L-homocysteine + H2O = S-(5-deoxy-D-ribos-5-yl)-L-homocysteine + adenine</text>
        <dbReference type="Rhea" id="RHEA:17805"/>
        <dbReference type="ChEBI" id="CHEBI:15377"/>
        <dbReference type="ChEBI" id="CHEBI:16708"/>
        <dbReference type="ChEBI" id="CHEBI:57856"/>
        <dbReference type="ChEBI" id="CHEBI:58195"/>
        <dbReference type="EC" id="3.2.2.9"/>
    </reaction>
</comment>
<comment type="catalytic activity">
    <reaction evidence="1">
        <text>S-methyl-5'-thioadenosine + H2O = 5-(methylsulfanyl)-D-ribose + adenine</text>
        <dbReference type="Rhea" id="RHEA:13617"/>
        <dbReference type="ChEBI" id="CHEBI:15377"/>
        <dbReference type="ChEBI" id="CHEBI:16708"/>
        <dbReference type="ChEBI" id="CHEBI:17509"/>
        <dbReference type="ChEBI" id="CHEBI:78440"/>
        <dbReference type="EC" id="3.2.2.9"/>
    </reaction>
</comment>
<comment type="catalytic activity">
    <reaction evidence="1">
        <text>5'-deoxyadenosine + H2O = 5-deoxy-D-ribose + adenine</text>
        <dbReference type="Rhea" id="RHEA:29859"/>
        <dbReference type="ChEBI" id="CHEBI:15377"/>
        <dbReference type="ChEBI" id="CHEBI:16708"/>
        <dbReference type="ChEBI" id="CHEBI:17319"/>
        <dbReference type="ChEBI" id="CHEBI:149540"/>
        <dbReference type="EC" id="3.2.2.9"/>
    </reaction>
    <physiologicalReaction direction="left-to-right" evidence="1">
        <dbReference type="Rhea" id="RHEA:29860"/>
    </physiologicalReaction>
</comment>
<comment type="pathway">
    <text evidence="1">Amino-acid biosynthesis; L-methionine biosynthesis via salvage pathway; S-methyl-5-thio-alpha-D-ribose 1-phosphate from S-methyl-5'-thioadenosine (hydrolase route): step 1/2.</text>
</comment>
<comment type="similarity">
    <text evidence="1">Belongs to the PNP/UDP phosphorylase family. MtnN subfamily.</text>
</comment>
<proteinExistence type="inferred from homology"/>
<feature type="chain" id="PRO_0000359268" description="5'-methylthioadenosine/S-adenosylhomocysteine nucleosidase">
    <location>
        <begin position="1"/>
        <end position="230"/>
    </location>
</feature>
<feature type="active site" description="Proton acceptor" evidence="1">
    <location>
        <position position="12"/>
    </location>
</feature>
<feature type="active site" description="Proton donor" evidence="1">
    <location>
        <position position="197"/>
    </location>
</feature>
<feature type="binding site" evidence="1">
    <location>
        <position position="78"/>
    </location>
    <ligand>
        <name>substrate</name>
    </ligand>
</feature>
<feature type="binding site" evidence="1">
    <location>
        <position position="152"/>
    </location>
    <ligand>
        <name>substrate</name>
    </ligand>
</feature>
<feature type="binding site" evidence="1">
    <location>
        <begin position="173"/>
        <end position="174"/>
    </location>
    <ligand>
        <name>substrate</name>
    </ligand>
</feature>
<gene>
    <name evidence="1" type="primary">mtnN</name>
    <name type="ordered locus">Asuc_1510</name>
</gene>
<keyword id="KW-0028">Amino-acid biosynthesis</keyword>
<keyword id="KW-0378">Hydrolase</keyword>
<keyword id="KW-0486">Methionine biosynthesis</keyword>
<keyword id="KW-1185">Reference proteome</keyword>
<organism>
    <name type="scientific">Actinobacillus succinogenes (strain ATCC 55618 / DSM 22257 / CCUG 43843 / 130Z)</name>
    <dbReference type="NCBI Taxonomy" id="339671"/>
    <lineage>
        <taxon>Bacteria</taxon>
        <taxon>Pseudomonadati</taxon>
        <taxon>Pseudomonadota</taxon>
        <taxon>Gammaproteobacteria</taxon>
        <taxon>Pasteurellales</taxon>
        <taxon>Pasteurellaceae</taxon>
        <taxon>Actinobacillus</taxon>
    </lineage>
</organism>
<accession>A6VPH1</accession>
<protein>
    <recommendedName>
        <fullName evidence="1">5'-methylthioadenosine/S-adenosylhomocysteine nucleosidase</fullName>
        <shortName evidence="1">MTA/SAH nucleosidase</shortName>
        <shortName evidence="1">MTAN</shortName>
        <ecNumber evidence="1">3.2.2.9</ecNumber>
    </recommendedName>
    <alternativeName>
        <fullName evidence="1">5'-deoxyadenosine nucleosidase</fullName>
        <shortName evidence="1">DOA nucleosidase</shortName>
        <shortName evidence="1">dAdo nucleosidase</shortName>
    </alternativeName>
    <alternativeName>
        <fullName evidence="1">5'-methylthioadenosine nucleosidase</fullName>
        <shortName evidence="1">MTA nucleosidase</shortName>
    </alternativeName>
    <alternativeName>
        <fullName evidence="1">S-adenosylhomocysteine nucleosidase</fullName>
        <shortName evidence="1">AdoHcy nucleosidase</shortName>
        <shortName evidence="1">SAH nucleosidase</shortName>
        <shortName evidence="1">SRH nucleosidase</shortName>
    </alternativeName>
</protein>
<sequence length="230" mass="23734">MKIGIVGAMAQEVEILAGLMTDKTEHKIGSAVVFEGEVNGKSVVLLQSGIGKVAAAIGTTVLLQGFKPDVVINTGSAGGVAQGLKVGDIVISTETAYHDADVTAFGYAKGQLPACPATFKSDEKLTALAEKIAQKQGRRVKQGLICSGDSFIAGGERLAQIKADFPPVTAVEMEAAAIAHVCHAFGVPFVVVRAISDAGDGEAGMSFEEFLPIAAKQSCEMVLGMLAELE</sequence>